<sequence length="338" mass="37955">MSTLRLLISDSYDPWFNLAVEECIFRQMPATQRVLFLWRNADTVVIGRAQNPWKECNTRRMEEDNVRLARRSSGGGAVFHDLGNTCFTFMAGKPEYDKTISTSIVLNALNALGVSAEASGRNDLVVKTAEGDRKVSGSAYRETKDRGFHHGTLLLNSDLSRLANYLNPDKKKLAAKGITSVRSRVTNLTELLPGITHEQVCEAITEAFFAHYGERVEAEIISPDKTPDLPNFAETFARQSSWEWNFGQAPEFSHLLDERFTWGGVELHFDVEKGHITRAQVFTDSLNPAPLEALAGRLQGCLYRADMLQQECEALLVDFPEQEKELRELSAWIAGAVR</sequence>
<reference key="1">
    <citation type="journal article" date="2009" name="PLoS Genet.">
        <title>Organised genome dynamics in the Escherichia coli species results in highly diverse adaptive paths.</title>
        <authorList>
            <person name="Touchon M."/>
            <person name="Hoede C."/>
            <person name="Tenaillon O."/>
            <person name="Barbe V."/>
            <person name="Baeriswyl S."/>
            <person name="Bidet P."/>
            <person name="Bingen E."/>
            <person name="Bonacorsi S."/>
            <person name="Bouchier C."/>
            <person name="Bouvet O."/>
            <person name="Calteau A."/>
            <person name="Chiapello H."/>
            <person name="Clermont O."/>
            <person name="Cruveiller S."/>
            <person name="Danchin A."/>
            <person name="Diard M."/>
            <person name="Dossat C."/>
            <person name="Karoui M.E."/>
            <person name="Frapy E."/>
            <person name="Garry L."/>
            <person name="Ghigo J.M."/>
            <person name="Gilles A.M."/>
            <person name="Johnson J."/>
            <person name="Le Bouguenec C."/>
            <person name="Lescat M."/>
            <person name="Mangenot S."/>
            <person name="Martinez-Jehanne V."/>
            <person name="Matic I."/>
            <person name="Nassif X."/>
            <person name="Oztas S."/>
            <person name="Petit M.A."/>
            <person name="Pichon C."/>
            <person name="Rouy Z."/>
            <person name="Ruf C.S."/>
            <person name="Schneider D."/>
            <person name="Tourret J."/>
            <person name="Vacherie B."/>
            <person name="Vallenet D."/>
            <person name="Medigue C."/>
            <person name="Rocha E.P.C."/>
            <person name="Denamur E."/>
        </authorList>
    </citation>
    <scope>NUCLEOTIDE SEQUENCE [LARGE SCALE GENOMIC DNA]</scope>
    <source>
        <strain>ED1a</strain>
    </source>
</reference>
<gene>
    <name evidence="1" type="primary">lplA</name>
    <name type="ordered locus">ECED1_5257</name>
</gene>
<name>LPLA_ECO81</name>
<keyword id="KW-0067">ATP-binding</keyword>
<keyword id="KW-0963">Cytoplasm</keyword>
<keyword id="KW-0436">Ligase</keyword>
<keyword id="KW-0547">Nucleotide-binding</keyword>
<feature type="chain" id="PRO_1000185796" description="Lipoate-protein ligase A">
    <location>
        <begin position="1"/>
        <end position="338"/>
    </location>
</feature>
<feature type="domain" description="BPL/LPL catalytic" evidence="2">
    <location>
        <begin position="29"/>
        <end position="216"/>
    </location>
</feature>
<feature type="binding site" evidence="1">
    <location>
        <position position="71"/>
    </location>
    <ligand>
        <name>ATP</name>
        <dbReference type="ChEBI" id="CHEBI:30616"/>
    </ligand>
</feature>
<feature type="binding site" evidence="1">
    <location>
        <begin position="76"/>
        <end position="79"/>
    </location>
    <ligand>
        <name>ATP</name>
        <dbReference type="ChEBI" id="CHEBI:30616"/>
    </ligand>
</feature>
<feature type="binding site" evidence="1">
    <location>
        <position position="134"/>
    </location>
    <ligand>
        <name>(R)-lipoate</name>
        <dbReference type="ChEBI" id="CHEBI:83088"/>
    </ligand>
</feature>
<feature type="binding site" evidence="1">
    <location>
        <position position="134"/>
    </location>
    <ligand>
        <name>ATP</name>
        <dbReference type="ChEBI" id="CHEBI:30616"/>
    </ligand>
</feature>
<proteinExistence type="inferred from homology"/>
<protein>
    <recommendedName>
        <fullName evidence="1">Lipoate-protein ligase A</fullName>
        <ecNumber evidence="1">6.3.1.20</ecNumber>
    </recommendedName>
    <alternativeName>
        <fullName evidence="1">Lipoate--protein ligase</fullName>
    </alternativeName>
</protein>
<evidence type="ECO:0000255" key="1">
    <source>
        <dbReference type="HAMAP-Rule" id="MF_01602"/>
    </source>
</evidence>
<evidence type="ECO:0000255" key="2">
    <source>
        <dbReference type="PROSITE-ProRule" id="PRU01067"/>
    </source>
</evidence>
<accession>B7MTD2</accession>
<comment type="function">
    <text evidence="1">Catalyzes both the ATP-dependent activation of exogenously supplied lipoate to lipoyl-AMP and the transfer of the activated lipoyl onto the lipoyl domains of lipoate-dependent enzymes.</text>
</comment>
<comment type="catalytic activity">
    <reaction evidence="1">
        <text>L-lysyl-[lipoyl-carrier protein] + (R)-lipoate + ATP = N(6)-[(R)-lipoyl]-L-lysyl-[lipoyl-carrier protein] + AMP + diphosphate + H(+)</text>
        <dbReference type="Rhea" id="RHEA:49288"/>
        <dbReference type="Rhea" id="RHEA-COMP:10500"/>
        <dbReference type="Rhea" id="RHEA-COMP:10502"/>
        <dbReference type="ChEBI" id="CHEBI:15378"/>
        <dbReference type="ChEBI" id="CHEBI:29969"/>
        <dbReference type="ChEBI" id="CHEBI:30616"/>
        <dbReference type="ChEBI" id="CHEBI:33019"/>
        <dbReference type="ChEBI" id="CHEBI:83088"/>
        <dbReference type="ChEBI" id="CHEBI:83099"/>
        <dbReference type="ChEBI" id="CHEBI:456215"/>
        <dbReference type="EC" id="6.3.1.20"/>
    </reaction>
</comment>
<comment type="pathway">
    <text evidence="1">Protein modification; protein lipoylation via exogenous pathway; protein N(6)-(lipoyl)lysine from lipoate: step 1/2.</text>
</comment>
<comment type="pathway">
    <text evidence="1">Protein modification; protein lipoylation via exogenous pathway; protein N(6)-(lipoyl)lysine from lipoate: step 2/2.</text>
</comment>
<comment type="subunit">
    <text evidence="1">Monomer.</text>
</comment>
<comment type="subcellular location">
    <subcellularLocation>
        <location evidence="1">Cytoplasm</location>
    </subcellularLocation>
</comment>
<comment type="miscellaneous">
    <text evidence="1">In the transfer reaction, the free carboxyl group of lipoic acid is attached via an amide linkage to the epsilon-amino group of a specific lysine residue of lipoyl domains of lipoate-dependent enzymes.</text>
</comment>
<comment type="similarity">
    <text evidence="1">Belongs to the LplA family.</text>
</comment>
<dbReference type="EC" id="6.3.1.20" evidence="1"/>
<dbReference type="EMBL" id="CU928162">
    <property type="protein sequence ID" value="CAR11208.1"/>
    <property type="molecule type" value="Genomic_DNA"/>
</dbReference>
<dbReference type="RefSeq" id="WP_000105875.1">
    <property type="nucleotide sequence ID" value="NC_011745.1"/>
</dbReference>
<dbReference type="SMR" id="B7MTD2"/>
<dbReference type="KEGG" id="ecq:ECED1_5257"/>
<dbReference type="HOGENOM" id="CLU_022986_0_1_6"/>
<dbReference type="UniPathway" id="UPA00537">
    <property type="reaction ID" value="UER00594"/>
</dbReference>
<dbReference type="UniPathway" id="UPA00537">
    <property type="reaction ID" value="UER00595"/>
</dbReference>
<dbReference type="Proteomes" id="UP000000748">
    <property type="component" value="Chromosome"/>
</dbReference>
<dbReference type="GO" id="GO:0005829">
    <property type="term" value="C:cytosol"/>
    <property type="evidence" value="ECO:0007669"/>
    <property type="project" value="TreeGrafter"/>
</dbReference>
<dbReference type="GO" id="GO:0005524">
    <property type="term" value="F:ATP binding"/>
    <property type="evidence" value="ECO:0007669"/>
    <property type="project" value="UniProtKB-KW"/>
</dbReference>
<dbReference type="GO" id="GO:0016979">
    <property type="term" value="F:lipoate-protein ligase activity"/>
    <property type="evidence" value="ECO:0007669"/>
    <property type="project" value="UniProtKB-UniRule"/>
</dbReference>
<dbReference type="GO" id="GO:0017118">
    <property type="term" value="F:lipoyltransferase activity"/>
    <property type="evidence" value="ECO:0007669"/>
    <property type="project" value="TreeGrafter"/>
</dbReference>
<dbReference type="GO" id="GO:0036211">
    <property type="term" value="P:protein modification process"/>
    <property type="evidence" value="ECO:0007669"/>
    <property type="project" value="InterPro"/>
</dbReference>
<dbReference type="CDD" id="cd16435">
    <property type="entry name" value="BPL_LplA_LipB"/>
    <property type="match status" value="1"/>
</dbReference>
<dbReference type="FunFam" id="3.30.390.50:FF:000002">
    <property type="entry name" value="Lipoate-protein ligase A"/>
    <property type="match status" value="1"/>
</dbReference>
<dbReference type="FunFam" id="3.30.930.10:FF:000024">
    <property type="entry name" value="Lipoate-protein ligase A"/>
    <property type="match status" value="1"/>
</dbReference>
<dbReference type="Gene3D" id="3.30.930.10">
    <property type="entry name" value="Bira Bifunctional Protein, Domain 2"/>
    <property type="match status" value="1"/>
</dbReference>
<dbReference type="Gene3D" id="3.30.390.50">
    <property type="entry name" value="CO dehydrogenase flavoprotein, C-terminal domain"/>
    <property type="match status" value="1"/>
</dbReference>
<dbReference type="HAMAP" id="MF_01602">
    <property type="entry name" value="LplA"/>
    <property type="match status" value="1"/>
</dbReference>
<dbReference type="InterPro" id="IPR045864">
    <property type="entry name" value="aa-tRNA-synth_II/BPL/LPL"/>
</dbReference>
<dbReference type="InterPro" id="IPR004143">
    <property type="entry name" value="BPL_LPL_catalytic"/>
</dbReference>
<dbReference type="InterPro" id="IPR023741">
    <property type="entry name" value="Lipoate_ligase_A"/>
</dbReference>
<dbReference type="InterPro" id="IPR019491">
    <property type="entry name" value="Lipoate_protein_ligase_C"/>
</dbReference>
<dbReference type="InterPro" id="IPR004562">
    <property type="entry name" value="LipoylTrfase_LipoateP_Ligase"/>
</dbReference>
<dbReference type="NCBIfam" id="TIGR00545">
    <property type="entry name" value="lipoyltrans"/>
    <property type="match status" value="1"/>
</dbReference>
<dbReference type="PANTHER" id="PTHR12561">
    <property type="entry name" value="LIPOATE-PROTEIN LIGASE"/>
    <property type="match status" value="1"/>
</dbReference>
<dbReference type="PANTHER" id="PTHR12561:SF3">
    <property type="entry name" value="LIPOYLTRANSFERASE 1, MITOCHONDRIAL"/>
    <property type="match status" value="1"/>
</dbReference>
<dbReference type="Pfam" id="PF10437">
    <property type="entry name" value="Lip_prot_lig_C"/>
    <property type="match status" value="1"/>
</dbReference>
<dbReference type="Pfam" id="PF21948">
    <property type="entry name" value="LplA-B_cat"/>
    <property type="match status" value="1"/>
</dbReference>
<dbReference type="SUPFAM" id="SSF55681">
    <property type="entry name" value="Class II aaRS and biotin synthetases"/>
    <property type="match status" value="1"/>
</dbReference>
<dbReference type="SUPFAM" id="SSF82649">
    <property type="entry name" value="SufE/NifU"/>
    <property type="match status" value="1"/>
</dbReference>
<dbReference type="PROSITE" id="PS51733">
    <property type="entry name" value="BPL_LPL_CATALYTIC"/>
    <property type="match status" value="1"/>
</dbReference>
<organism>
    <name type="scientific">Escherichia coli O81 (strain ED1a)</name>
    <dbReference type="NCBI Taxonomy" id="585397"/>
    <lineage>
        <taxon>Bacteria</taxon>
        <taxon>Pseudomonadati</taxon>
        <taxon>Pseudomonadota</taxon>
        <taxon>Gammaproteobacteria</taxon>
        <taxon>Enterobacterales</taxon>
        <taxon>Enterobacteriaceae</taxon>
        <taxon>Escherichia</taxon>
    </lineage>
</organism>